<name>COAE_YERPE</name>
<proteinExistence type="inferred from homology"/>
<reference key="1">
    <citation type="journal article" date="2001" name="Nature">
        <title>Genome sequence of Yersinia pestis, the causative agent of plague.</title>
        <authorList>
            <person name="Parkhill J."/>
            <person name="Wren B.W."/>
            <person name="Thomson N.R."/>
            <person name="Titball R.W."/>
            <person name="Holden M.T.G."/>
            <person name="Prentice M.B."/>
            <person name="Sebaihia M."/>
            <person name="James K.D."/>
            <person name="Churcher C.M."/>
            <person name="Mungall K.L."/>
            <person name="Baker S."/>
            <person name="Basham D."/>
            <person name="Bentley S.D."/>
            <person name="Brooks K."/>
            <person name="Cerdeno-Tarraga A.-M."/>
            <person name="Chillingworth T."/>
            <person name="Cronin A."/>
            <person name="Davies R.M."/>
            <person name="Davis P."/>
            <person name="Dougan G."/>
            <person name="Feltwell T."/>
            <person name="Hamlin N."/>
            <person name="Holroyd S."/>
            <person name="Jagels K."/>
            <person name="Karlyshev A.V."/>
            <person name="Leather S."/>
            <person name="Moule S."/>
            <person name="Oyston P.C.F."/>
            <person name="Quail M.A."/>
            <person name="Rutherford K.M."/>
            <person name="Simmonds M."/>
            <person name="Skelton J."/>
            <person name="Stevens K."/>
            <person name="Whitehead S."/>
            <person name="Barrell B.G."/>
        </authorList>
    </citation>
    <scope>NUCLEOTIDE SEQUENCE [LARGE SCALE GENOMIC DNA]</scope>
    <source>
        <strain>CO-92 / Biovar Orientalis</strain>
    </source>
</reference>
<reference key="2">
    <citation type="journal article" date="2002" name="J. Bacteriol.">
        <title>Genome sequence of Yersinia pestis KIM.</title>
        <authorList>
            <person name="Deng W."/>
            <person name="Burland V."/>
            <person name="Plunkett G. III"/>
            <person name="Boutin A."/>
            <person name="Mayhew G.F."/>
            <person name="Liss P."/>
            <person name="Perna N.T."/>
            <person name="Rose D.J."/>
            <person name="Mau B."/>
            <person name="Zhou S."/>
            <person name="Schwartz D.C."/>
            <person name="Fetherston J.D."/>
            <person name="Lindler L.E."/>
            <person name="Brubaker R.R."/>
            <person name="Plano G.V."/>
            <person name="Straley S.C."/>
            <person name="McDonough K.A."/>
            <person name="Nilles M.L."/>
            <person name="Matson J.S."/>
            <person name="Blattner F.R."/>
            <person name="Perry R.D."/>
        </authorList>
    </citation>
    <scope>NUCLEOTIDE SEQUENCE [LARGE SCALE GENOMIC DNA]</scope>
    <source>
        <strain>KIM10+ / Biovar Mediaevalis</strain>
    </source>
</reference>
<reference key="3">
    <citation type="journal article" date="2004" name="DNA Res.">
        <title>Complete genome sequence of Yersinia pestis strain 91001, an isolate avirulent to humans.</title>
        <authorList>
            <person name="Song Y."/>
            <person name="Tong Z."/>
            <person name="Wang J."/>
            <person name="Wang L."/>
            <person name="Guo Z."/>
            <person name="Han Y."/>
            <person name="Zhang J."/>
            <person name="Pei D."/>
            <person name="Zhou D."/>
            <person name="Qin H."/>
            <person name="Pang X."/>
            <person name="Han Y."/>
            <person name="Zhai J."/>
            <person name="Li M."/>
            <person name="Cui B."/>
            <person name="Qi Z."/>
            <person name="Jin L."/>
            <person name="Dai R."/>
            <person name="Chen F."/>
            <person name="Li S."/>
            <person name="Ye C."/>
            <person name="Du Z."/>
            <person name="Lin W."/>
            <person name="Wang J."/>
            <person name="Yu J."/>
            <person name="Yang H."/>
            <person name="Wang J."/>
            <person name="Huang P."/>
            <person name="Yang R."/>
        </authorList>
    </citation>
    <scope>NUCLEOTIDE SEQUENCE [LARGE SCALE GENOMIC DNA]</scope>
    <source>
        <strain>91001 / Biovar Mediaevalis</strain>
    </source>
</reference>
<accession>Q8ZBI0</accession>
<accession>Q0WBL6</accession>
<sequence>MTYIVALTGGIGSGKSTVANAFANLGVPLVDADIIARQVVEPGTSALAAIASRYGENILQQDGSLNRAALRQKIFSEQQEKAWLNSLLHPLIQQETQRQLAGIDQPYALWVVPLLVENGLHHRADRVLVVDVTPDIQLARTMARDGITRQQAENILASQVSRQQRLACADDIIDNSGDPLMIAQHVASLHHRYLKLATAAQQDLHQ</sequence>
<dbReference type="EC" id="2.7.1.24" evidence="1"/>
<dbReference type="EMBL" id="AL590842">
    <property type="protein sequence ID" value="CAL22019.1"/>
    <property type="molecule type" value="Genomic_DNA"/>
</dbReference>
<dbReference type="EMBL" id="AE009952">
    <property type="protein sequence ID" value="AAM84344.1"/>
    <property type="molecule type" value="Genomic_DNA"/>
</dbReference>
<dbReference type="EMBL" id="AE017042">
    <property type="protein sequence ID" value="AAS60530.1"/>
    <property type="molecule type" value="Genomic_DNA"/>
</dbReference>
<dbReference type="PIR" id="AH0416">
    <property type="entry name" value="AH0416"/>
</dbReference>
<dbReference type="RefSeq" id="WP_002209319.1">
    <property type="nucleotide sequence ID" value="NZ_WUCM01000091.1"/>
</dbReference>
<dbReference type="RefSeq" id="YP_002348322.1">
    <property type="nucleotide sequence ID" value="NC_003143.1"/>
</dbReference>
<dbReference type="SMR" id="Q8ZBI0"/>
<dbReference type="STRING" id="214092.YPO3430"/>
<dbReference type="PaxDb" id="214092-YPO3430"/>
<dbReference type="DNASU" id="1145704"/>
<dbReference type="EnsemblBacteria" id="AAS60530">
    <property type="protein sequence ID" value="AAS60530"/>
    <property type="gene ID" value="YP_0254"/>
</dbReference>
<dbReference type="GeneID" id="57975280"/>
<dbReference type="KEGG" id="ype:YPO3430"/>
<dbReference type="KEGG" id="ypk:y0757"/>
<dbReference type="KEGG" id="ypm:YP_0254"/>
<dbReference type="PATRIC" id="fig|214092.21.peg.3919"/>
<dbReference type="eggNOG" id="COG0237">
    <property type="taxonomic scope" value="Bacteria"/>
</dbReference>
<dbReference type="HOGENOM" id="CLU_057180_1_2_6"/>
<dbReference type="OMA" id="CQMDIEQ"/>
<dbReference type="OrthoDB" id="9812943at2"/>
<dbReference type="UniPathway" id="UPA00241">
    <property type="reaction ID" value="UER00356"/>
</dbReference>
<dbReference type="Proteomes" id="UP000000815">
    <property type="component" value="Chromosome"/>
</dbReference>
<dbReference type="Proteomes" id="UP000001019">
    <property type="component" value="Chromosome"/>
</dbReference>
<dbReference type="Proteomes" id="UP000002490">
    <property type="component" value="Chromosome"/>
</dbReference>
<dbReference type="GO" id="GO:0005737">
    <property type="term" value="C:cytoplasm"/>
    <property type="evidence" value="ECO:0007669"/>
    <property type="project" value="UniProtKB-SubCell"/>
</dbReference>
<dbReference type="GO" id="GO:0005524">
    <property type="term" value="F:ATP binding"/>
    <property type="evidence" value="ECO:0007669"/>
    <property type="project" value="UniProtKB-UniRule"/>
</dbReference>
<dbReference type="GO" id="GO:0004140">
    <property type="term" value="F:dephospho-CoA kinase activity"/>
    <property type="evidence" value="ECO:0000318"/>
    <property type="project" value="GO_Central"/>
</dbReference>
<dbReference type="GO" id="GO:0015937">
    <property type="term" value="P:coenzyme A biosynthetic process"/>
    <property type="evidence" value="ECO:0000318"/>
    <property type="project" value="GO_Central"/>
</dbReference>
<dbReference type="CDD" id="cd02022">
    <property type="entry name" value="DPCK"/>
    <property type="match status" value="1"/>
</dbReference>
<dbReference type="FunFam" id="3.40.50.300:FF:000518">
    <property type="entry name" value="Dephospho-CoA kinase"/>
    <property type="match status" value="1"/>
</dbReference>
<dbReference type="Gene3D" id="3.40.50.300">
    <property type="entry name" value="P-loop containing nucleotide triphosphate hydrolases"/>
    <property type="match status" value="1"/>
</dbReference>
<dbReference type="HAMAP" id="MF_00376">
    <property type="entry name" value="Dephospho_CoA_kinase"/>
    <property type="match status" value="1"/>
</dbReference>
<dbReference type="InterPro" id="IPR001977">
    <property type="entry name" value="Depp_CoAkinase"/>
</dbReference>
<dbReference type="InterPro" id="IPR027417">
    <property type="entry name" value="P-loop_NTPase"/>
</dbReference>
<dbReference type="NCBIfam" id="TIGR00152">
    <property type="entry name" value="dephospho-CoA kinase"/>
    <property type="match status" value="1"/>
</dbReference>
<dbReference type="PANTHER" id="PTHR10695:SF46">
    <property type="entry name" value="BIFUNCTIONAL COENZYME A SYNTHASE-RELATED"/>
    <property type="match status" value="1"/>
</dbReference>
<dbReference type="PANTHER" id="PTHR10695">
    <property type="entry name" value="DEPHOSPHO-COA KINASE-RELATED"/>
    <property type="match status" value="1"/>
</dbReference>
<dbReference type="Pfam" id="PF01121">
    <property type="entry name" value="CoaE"/>
    <property type="match status" value="1"/>
</dbReference>
<dbReference type="SUPFAM" id="SSF52540">
    <property type="entry name" value="P-loop containing nucleoside triphosphate hydrolases"/>
    <property type="match status" value="1"/>
</dbReference>
<dbReference type="PROSITE" id="PS51219">
    <property type="entry name" value="DPCK"/>
    <property type="match status" value="1"/>
</dbReference>
<organism>
    <name type="scientific">Yersinia pestis</name>
    <dbReference type="NCBI Taxonomy" id="632"/>
    <lineage>
        <taxon>Bacteria</taxon>
        <taxon>Pseudomonadati</taxon>
        <taxon>Pseudomonadota</taxon>
        <taxon>Gammaproteobacteria</taxon>
        <taxon>Enterobacterales</taxon>
        <taxon>Yersiniaceae</taxon>
        <taxon>Yersinia</taxon>
    </lineage>
</organism>
<feature type="chain" id="PRO_0000173038" description="Dephospho-CoA kinase">
    <location>
        <begin position="1"/>
        <end position="206"/>
    </location>
</feature>
<feature type="domain" description="DPCK" evidence="1">
    <location>
        <begin position="4"/>
        <end position="200"/>
    </location>
</feature>
<feature type="binding site" evidence="1">
    <location>
        <begin position="12"/>
        <end position="17"/>
    </location>
    <ligand>
        <name>ATP</name>
        <dbReference type="ChEBI" id="CHEBI:30616"/>
    </ligand>
</feature>
<keyword id="KW-0067">ATP-binding</keyword>
<keyword id="KW-0173">Coenzyme A biosynthesis</keyword>
<keyword id="KW-0963">Cytoplasm</keyword>
<keyword id="KW-0418">Kinase</keyword>
<keyword id="KW-0547">Nucleotide-binding</keyword>
<keyword id="KW-1185">Reference proteome</keyword>
<keyword id="KW-0808">Transferase</keyword>
<evidence type="ECO:0000255" key="1">
    <source>
        <dbReference type="HAMAP-Rule" id="MF_00376"/>
    </source>
</evidence>
<gene>
    <name evidence="1" type="primary">coaE</name>
    <name type="ordered locus">YPO3430</name>
    <name type="ordered locus">y0757</name>
    <name type="ordered locus">YP_0254</name>
</gene>
<protein>
    <recommendedName>
        <fullName evidence="1">Dephospho-CoA kinase</fullName>
        <ecNumber evidence="1">2.7.1.24</ecNumber>
    </recommendedName>
    <alternativeName>
        <fullName evidence="1">Dephosphocoenzyme A kinase</fullName>
    </alternativeName>
</protein>
<comment type="function">
    <text evidence="1">Catalyzes the phosphorylation of the 3'-hydroxyl group of dephosphocoenzyme A to form coenzyme A.</text>
</comment>
<comment type="catalytic activity">
    <reaction evidence="1">
        <text>3'-dephospho-CoA + ATP = ADP + CoA + H(+)</text>
        <dbReference type="Rhea" id="RHEA:18245"/>
        <dbReference type="ChEBI" id="CHEBI:15378"/>
        <dbReference type="ChEBI" id="CHEBI:30616"/>
        <dbReference type="ChEBI" id="CHEBI:57287"/>
        <dbReference type="ChEBI" id="CHEBI:57328"/>
        <dbReference type="ChEBI" id="CHEBI:456216"/>
        <dbReference type="EC" id="2.7.1.24"/>
    </reaction>
</comment>
<comment type="pathway">
    <text evidence="1">Cofactor biosynthesis; coenzyme A biosynthesis; CoA from (R)-pantothenate: step 5/5.</text>
</comment>
<comment type="subcellular location">
    <subcellularLocation>
        <location evidence="1">Cytoplasm</location>
    </subcellularLocation>
</comment>
<comment type="similarity">
    <text evidence="1">Belongs to the CoaE family.</text>
</comment>